<organism>
    <name type="scientific">Methanosarcina mazei (strain ATCC BAA-159 / DSM 3647 / Goe1 / Go1 / JCM 11833 / OCM 88)</name>
    <name type="common">Methanosarcina frisia</name>
    <dbReference type="NCBI Taxonomy" id="192952"/>
    <lineage>
        <taxon>Archaea</taxon>
        <taxon>Methanobacteriati</taxon>
        <taxon>Methanobacteriota</taxon>
        <taxon>Stenosarchaea group</taxon>
        <taxon>Methanomicrobia</taxon>
        <taxon>Methanosarcinales</taxon>
        <taxon>Methanosarcinaceae</taxon>
        <taxon>Methanosarcina</taxon>
    </lineage>
</organism>
<feature type="chain" id="PRO_0000138920" description="Protease HtpX homolog 2">
    <location>
        <begin position="1"/>
        <end position="294"/>
    </location>
</feature>
<feature type="transmembrane region" description="Helical" evidence="1">
    <location>
        <begin position="15"/>
        <end position="35"/>
    </location>
</feature>
<feature type="transmembrane region" description="Helical" evidence="1">
    <location>
        <begin position="36"/>
        <end position="56"/>
    </location>
</feature>
<feature type="transmembrane region" description="Helical" evidence="1">
    <location>
        <begin position="151"/>
        <end position="171"/>
    </location>
</feature>
<feature type="transmembrane region" description="Helical" evidence="1">
    <location>
        <begin position="185"/>
        <end position="205"/>
    </location>
</feature>
<feature type="active site" evidence="1">
    <location>
        <position position="141"/>
    </location>
</feature>
<feature type="binding site" evidence="1">
    <location>
        <position position="140"/>
    </location>
    <ligand>
        <name>Zn(2+)</name>
        <dbReference type="ChEBI" id="CHEBI:29105"/>
        <note>catalytic</note>
    </ligand>
</feature>
<feature type="binding site" evidence="1">
    <location>
        <position position="144"/>
    </location>
    <ligand>
        <name>Zn(2+)</name>
        <dbReference type="ChEBI" id="CHEBI:29105"/>
        <note>catalytic</note>
    </ligand>
</feature>
<feature type="binding site" evidence="1">
    <location>
        <position position="213"/>
    </location>
    <ligand>
        <name>Zn(2+)</name>
        <dbReference type="ChEBI" id="CHEBI:29105"/>
        <note>catalytic</note>
    </ligand>
</feature>
<keyword id="KW-1003">Cell membrane</keyword>
<keyword id="KW-0378">Hydrolase</keyword>
<keyword id="KW-0472">Membrane</keyword>
<keyword id="KW-0479">Metal-binding</keyword>
<keyword id="KW-0482">Metalloprotease</keyword>
<keyword id="KW-0645">Protease</keyword>
<keyword id="KW-0812">Transmembrane</keyword>
<keyword id="KW-1133">Transmembrane helix</keyword>
<keyword id="KW-0862">Zinc</keyword>
<sequence length="294" mass="32658">MKRKWERDLGLQGRMLFTMFLLAAVYLFFLAFLSYYGTSQIFIILFIGLFMAAQYFYSDKMVLWTTGAQIVSESEAPQLHGMITRLCAIADLPKPQVAIVRTQVPNAFATGRNQNKAVVAVTTGLMDKLSPAELEAVLAHELSHVKNRDMAVLTIASFLSSVAFYIVRYSLYFGNMGGGRRKEGGGIMLVWLVSIVVWIVSFLLIRALSRYREFSADRGAAVITGQPANLASALMKISGVMDRVPGDDLRKVEGMNAFFIIPAISGSSIMDIFSTHPSVEKRIAKLEKMQQEMS</sequence>
<name>HTPX2_METMA</name>
<evidence type="ECO:0000255" key="1">
    <source>
        <dbReference type="HAMAP-Rule" id="MF_00188"/>
    </source>
</evidence>
<dbReference type="EC" id="3.4.24.-" evidence="1"/>
<dbReference type="EMBL" id="AE008384">
    <property type="protein sequence ID" value="AAM32830.1"/>
    <property type="molecule type" value="Genomic_DNA"/>
</dbReference>
<dbReference type="SMR" id="Q8PSE5"/>
<dbReference type="MEROPS" id="M48.004"/>
<dbReference type="KEGG" id="mma:MM_3134"/>
<dbReference type="PATRIC" id="fig|192952.21.peg.3638"/>
<dbReference type="eggNOG" id="arCOG01331">
    <property type="taxonomic scope" value="Archaea"/>
</dbReference>
<dbReference type="HOGENOM" id="CLU_042266_0_2_2"/>
<dbReference type="Proteomes" id="UP000000595">
    <property type="component" value="Chromosome"/>
</dbReference>
<dbReference type="GO" id="GO:0005886">
    <property type="term" value="C:plasma membrane"/>
    <property type="evidence" value="ECO:0007669"/>
    <property type="project" value="UniProtKB-SubCell"/>
</dbReference>
<dbReference type="GO" id="GO:0004222">
    <property type="term" value="F:metalloendopeptidase activity"/>
    <property type="evidence" value="ECO:0007669"/>
    <property type="project" value="UniProtKB-UniRule"/>
</dbReference>
<dbReference type="GO" id="GO:0008270">
    <property type="term" value="F:zinc ion binding"/>
    <property type="evidence" value="ECO:0007669"/>
    <property type="project" value="UniProtKB-UniRule"/>
</dbReference>
<dbReference type="GO" id="GO:0006508">
    <property type="term" value="P:proteolysis"/>
    <property type="evidence" value="ECO:0007669"/>
    <property type="project" value="UniProtKB-KW"/>
</dbReference>
<dbReference type="CDD" id="cd07327">
    <property type="entry name" value="M48B_HtpX_like"/>
    <property type="match status" value="1"/>
</dbReference>
<dbReference type="Gene3D" id="3.30.2010.10">
    <property type="entry name" value="Metalloproteases ('zincins'), catalytic domain"/>
    <property type="match status" value="1"/>
</dbReference>
<dbReference type="HAMAP" id="MF_00188">
    <property type="entry name" value="Pept_M48_protease_HtpX"/>
    <property type="match status" value="1"/>
</dbReference>
<dbReference type="InterPro" id="IPR050083">
    <property type="entry name" value="HtpX_protease"/>
</dbReference>
<dbReference type="InterPro" id="IPR022919">
    <property type="entry name" value="Pept_M48_protease_HtpX"/>
</dbReference>
<dbReference type="InterPro" id="IPR001915">
    <property type="entry name" value="Peptidase_M48"/>
</dbReference>
<dbReference type="NCBIfam" id="NF002669">
    <property type="entry name" value="PRK02391.1"/>
    <property type="match status" value="1"/>
</dbReference>
<dbReference type="PANTHER" id="PTHR43221">
    <property type="entry name" value="PROTEASE HTPX"/>
    <property type="match status" value="1"/>
</dbReference>
<dbReference type="PANTHER" id="PTHR43221:SF2">
    <property type="entry name" value="PROTEASE HTPX HOMOLOG"/>
    <property type="match status" value="1"/>
</dbReference>
<dbReference type="Pfam" id="PF01435">
    <property type="entry name" value="Peptidase_M48"/>
    <property type="match status" value="1"/>
</dbReference>
<gene>
    <name evidence="1" type="primary">htpX2</name>
    <name type="ordered locus">MM_3134</name>
</gene>
<accession>Q8PSE5</accession>
<reference key="1">
    <citation type="journal article" date="2002" name="J. Mol. Microbiol. Biotechnol.">
        <title>The genome of Methanosarcina mazei: evidence for lateral gene transfer between Bacteria and Archaea.</title>
        <authorList>
            <person name="Deppenmeier U."/>
            <person name="Johann A."/>
            <person name="Hartsch T."/>
            <person name="Merkl R."/>
            <person name="Schmitz R.A."/>
            <person name="Martinez-Arias R."/>
            <person name="Henne A."/>
            <person name="Wiezer A."/>
            <person name="Baeumer S."/>
            <person name="Jacobi C."/>
            <person name="Brueggemann H."/>
            <person name="Lienard T."/>
            <person name="Christmann A."/>
            <person name="Boemecke M."/>
            <person name="Steckel S."/>
            <person name="Bhattacharyya A."/>
            <person name="Lykidis A."/>
            <person name="Overbeek R."/>
            <person name="Klenk H.-P."/>
            <person name="Gunsalus R.P."/>
            <person name="Fritz H.-J."/>
            <person name="Gottschalk G."/>
        </authorList>
    </citation>
    <scope>NUCLEOTIDE SEQUENCE [LARGE SCALE GENOMIC DNA]</scope>
    <source>
        <strain>ATCC BAA-159 / DSM 3647 / Goe1 / Go1 / JCM 11833 / OCM 88</strain>
    </source>
</reference>
<comment type="cofactor">
    <cofactor evidence="1">
        <name>Zn(2+)</name>
        <dbReference type="ChEBI" id="CHEBI:29105"/>
    </cofactor>
    <text evidence="1">Binds 1 zinc ion per subunit.</text>
</comment>
<comment type="subcellular location">
    <subcellularLocation>
        <location evidence="1">Cell membrane</location>
        <topology evidence="1">Multi-pass membrane protein</topology>
    </subcellularLocation>
</comment>
<comment type="similarity">
    <text evidence="1">Belongs to the peptidase M48B family.</text>
</comment>
<protein>
    <recommendedName>
        <fullName evidence="1">Protease HtpX homolog 2</fullName>
        <ecNumber evidence="1">3.4.24.-</ecNumber>
    </recommendedName>
</protein>
<proteinExistence type="inferred from homology"/>